<feature type="chain" id="PRO_0000275796" description="Photosystem II reaction center protein I">
    <location>
        <begin position="1"/>
        <end position="37"/>
    </location>
</feature>
<feature type="transmembrane region" description="Helical" evidence="1">
    <location>
        <begin position="4"/>
        <end position="24"/>
    </location>
</feature>
<geneLocation type="chloroplast"/>
<accession>Q06RE7</accession>
<protein>
    <recommendedName>
        <fullName evidence="1">Photosystem II reaction center protein I</fullName>
        <shortName evidence="1">PSII-I</shortName>
    </recommendedName>
    <alternativeName>
        <fullName evidence="1">PSII 4.8 kDa protein</fullName>
    </alternativeName>
</protein>
<reference key="1">
    <citation type="journal article" date="2007" name="Mol. Biol. Evol.">
        <title>Gene relocations within chloroplast genomes of Jasminum and Menodora (Oleaceae) are due to multiple, overlapping inversions.</title>
        <authorList>
            <person name="Lee H.-L."/>
            <person name="Jansen R.K."/>
            <person name="Chumley T.W."/>
            <person name="Kim K.-J."/>
        </authorList>
    </citation>
    <scope>NUCLEOTIDE SEQUENCE [LARGE SCALE GENOMIC DNA]</scope>
</reference>
<dbReference type="EMBL" id="DQ673255">
    <property type="protein sequence ID" value="ABG74612.1"/>
    <property type="molecule type" value="Genomic_DNA"/>
</dbReference>
<dbReference type="RefSeq" id="YP_778474.1">
    <property type="nucleotide sequence ID" value="NC_008407.1"/>
</dbReference>
<dbReference type="SMR" id="Q06RE7"/>
<dbReference type="GeneID" id="4319780"/>
<dbReference type="GO" id="GO:0009535">
    <property type="term" value="C:chloroplast thylakoid membrane"/>
    <property type="evidence" value="ECO:0007669"/>
    <property type="project" value="UniProtKB-SubCell"/>
</dbReference>
<dbReference type="GO" id="GO:0009539">
    <property type="term" value="C:photosystem II reaction center"/>
    <property type="evidence" value="ECO:0007669"/>
    <property type="project" value="InterPro"/>
</dbReference>
<dbReference type="GO" id="GO:0015979">
    <property type="term" value="P:photosynthesis"/>
    <property type="evidence" value="ECO:0007669"/>
    <property type="project" value="UniProtKB-UniRule"/>
</dbReference>
<dbReference type="HAMAP" id="MF_01316">
    <property type="entry name" value="PSII_PsbI"/>
    <property type="match status" value="1"/>
</dbReference>
<dbReference type="InterPro" id="IPR003686">
    <property type="entry name" value="PSII_PsbI"/>
</dbReference>
<dbReference type="InterPro" id="IPR037271">
    <property type="entry name" value="PSII_PsbI_sf"/>
</dbReference>
<dbReference type="NCBIfam" id="NF002735">
    <property type="entry name" value="PRK02655.1"/>
    <property type="match status" value="1"/>
</dbReference>
<dbReference type="PANTHER" id="PTHR35772">
    <property type="entry name" value="PHOTOSYSTEM II REACTION CENTER PROTEIN I"/>
    <property type="match status" value="1"/>
</dbReference>
<dbReference type="PANTHER" id="PTHR35772:SF1">
    <property type="entry name" value="PHOTOSYSTEM II REACTION CENTER PROTEIN I"/>
    <property type="match status" value="1"/>
</dbReference>
<dbReference type="Pfam" id="PF02532">
    <property type="entry name" value="PsbI"/>
    <property type="match status" value="1"/>
</dbReference>
<dbReference type="SUPFAM" id="SSF161041">
    <property type="entry name" value="Photosystem II reaction center protein I, PsbI"/>
    <property type="match status" value="1"/>
</dbReference>
<sequence>MLTLKLFVYTVVIFFVSLFIFGFLSNDPGRNPGQREE</sequence>
<comment type="function">
    <text evidence="1">One of the components of the core complex of photosystem II (PSII), required for its stability and/or assembly. PSII is a light-driven water:plastoquinone oxidoreductase that uses light energy to abstract electrons from H(2)O, generating O(2) and a proton gradient subsequently used for ATP formation. It consists of a core antenna complex that captures photons, and an electron transfer chain that converts photonic excitation into a charge separation.</text>
</comment>
<comment type="subunit">
    <text evidence="1">PSII is composed of 1 copy each of membrane proteins PsbA, PsbB, PsbC, PsbD, PsbE, PsbF, PsbH, PsbI, PsbJ, PsbK, PsbL, PsbM, PsbT, PsbX, PsbY, PsbZ, Psb30/Ycf12, at least 3 peripheral proteins of the oxygen-evolving complex and a large number of cofactors. It forms dimeric complexes.</text>
</comment>
<comment type="subcellular location">
    <subcellularLocation>
        <location evidence="1">Plastid</location>
        <location evidence="1">Chloroplast thylakoid membrane</location>
        <topology evidence="1">Single-pass membrane protein</topology>
    </subcellularLocation>
</comment>
<comment type="similarity">
    <text evidence="1">Belongs to the PsbI family.</text>
</comment>
<name>PSBI_JASNU</name>
<keyword id="KW-0150">Chloroplast</keyword>
<keyword id="KW-0472">Membrane</keyword>
<keyword id="KW-0602">Photosynthesis</keyword>
<keyword id="KW-0604">Photosystem II</keyword>
<keyword id="KW-0934">Plastid</keyword>
<keyword id="KW-0674">Reaction center</keyword>
<keyword id="KW-0793">Thylakoid</keyword>
<keyword id="KW-0812">Transmembrane</keyword>
<keyword id="KW-1133">Transmembrane helix</keyword>
<gene>
    <name evidence="1" type="primary">psbI</name>
    <name type="ORF">JNC0094</name>
</gene>
<evidence type="ECO:0000255" key="1">
    <source>
        <dbReference type="HAMAP-Rule" id="MF_01316"/>
    </source>
</evidence>
<proteinExistence type="inferred from homology"/>
<organism>
    <name type="scientific">Jasminum nudiflorum</name>
    <name type="common">Winter jasmine</name>
    <dbReference type="NCBI Taxonomy" id="126431"/>
    <lineage>
        <taxon>Eukaryota</taxon>
        <taxon>Viridiplantae</taxon>
        <taxon>Streptophyta</taxon>
        <taxon>Embryophyta</taxon>
        <taxon>Tracheophyta</taxon>
        <taxon>Spermatophyta</taxon>
        <taxon>Magnoliopsida</taxon>
        <taxon>eudicotyledons</taxon>
        <taxon>Gunneridae</taxon>
        <taxon>Pentapetalae</taxon>
        <taxon>asterids</taxon>
        <taxon>lamiids</taxon>
        <taxon>Lamiales</taxon>
        <taxon>Oleaceae</taxon>
        <taxon>Jasmineae</taxon>
        <taxon>Jasminum</taxon>
    </lineage>
</organism>